<name>GUAA_XANOM</name>
<proteinExistence type="inferred from homology"/>
<comment type="function">
    <text evidence="1">Catalyzes the synthesis of GMP from XMP.</text>
</comment>
<comment type="catalytic activity">
    <reaction evidence="1">
        <text>XMP + L-glutamine + ATP + H2O = GMP + L-glutamate + AMP + diphosphate + 2 H(+)</text>
        <dbReference type="Rhea" id="RHEA:11680"/>
        <dbReference type="ChEBI" id="CHEBI:15377"/>
        <dbReference type="ChEBI" id="CHEBI:15378"/>
        <dbReference type="ChEBI" id="CHEBI:29985"/>
        <dbReference type="ChEBI" id="CHEBI:30616"/>
        <dbReference type="ChEBI" id="CHEBI:33019"/>
        <dbReference type="ChEBI" id="CHEBI:57464"/>
        <dbReference type="ChEBI" id="CHEBI:58115"/>
        <dbReference type="ChEBI" id="CHEBI:58359"/>
        <dbReference type="ChEBI" id="CHEBI:456215"/>
        <dbReference type="EC" id="6.3.5.2"/>
    </reaction>
</comment>
<comment type="pathway">
    <text evidence="1">Purine metabolism; GMP biosynthesis; GMP from XMP (L-Gln route): step 1/1.</text>
</comment>
<comment type="subunit">
    <text evidence="1">Homodimer.</text>
</comment>
<reference key="1">
    <citation type="journal article" date="2005" name="Jpn. Agric. Res. Q.">
        <title>Genome sequence of Xanthomonas oryzae pv. oryzae suggests contribution of large numbers of effector genes and insertion sequences to its race diversity.</title>
        <authorList>
            <person name="Ochiai H."/>
            <person name="Inoue Y."/>
            <person name="Takeya M."/>
            <person name="Sasaki A."/>
            <person name="Kaku H."/>
        </authorList>
    </citation>
    <scope>NUCLEOTIDE SEQUENCE [LARGE SCALE GENOMIC DNA]</scope>
    <source>
        <strain>MAFF 311018</strain>
    </source>
</reference>
<evidence type="ECO:0000255" key="1">
    <source>
        <dbReference type="HAMAP-Rule" id="MF_00344"/>
    </source>
</evidence>
<keyword id="KW-0067">ATP-binding</keyword>
<keyword id="KW-0315">Glutamine amidotransferase</keyword>
<keyword id="KW-0332">GMP biosynthesis</keyword>
<keyword id="KW-0436">Ligase</keyword>
<keyword id="KW-0547">Nucleotide-binding</keyword>
<keyword id="KW-0658">Purine biosynthesis</keyword>
<accession>Q2P3Q9</accession>
<organism>
    <name type="scientific">Xanthomonas oryzae pv. oryzae (strain MAFF 311018)</name>
    <dbReference type="NCBI Taxonomy" id="342109"/>
    <lineage>
        <taxon>Bacteria</taxon>
        <taxon>Pseudomonadati</taxon>
        <taxon>Pseudomonadota</taxon>
        <taxon>Gammaproteobacteria</taxon>
        <taxon>Lysobacterales</taxon>
        <taxon>Lysobacteraceae</taxon>
        <taxon>Xanthomonas</taxon>
    </lineage>
</organism>
<dbReference type="EC" id="6.3.5.2" evidence="1"/>
<dbReference type="EMBL" id="AP008229">
    <property type="protein sequence ID" value="BAE68818.1"/>
    <property type="molecule type" value="Genomic_DNA"/>
</dbReference>
<dbReference type="RefSeq" id="WP_011408452.1">
    <property type="nucleotide sequence ID" value="NC_007705.1"/>
</dbReference>
<dbReference type="SMR" id="Q2P3Q9"/>
<dbReference type="KEGG" id="xom:XOO2063"/>
<dbReference type="HOGENOM" id="CLU_014340_0_5_6"/>
<dbReference type="UniPathway" id="UPA00189">
    <property type="reaction ID" value="UER00296"/>
</dbReference>
<dbReference type="GO" id="GO:0005829">
    <property type="term" value="C:cytosol"/>
    <property type="evidence" value="ECO:0007669"/>
    <property type="project" value="TreeGrafter"/>
</dbReference>
<dbReference type="GO" id="GO:0005524">
    <property type="term" value="F:ATP binding"/>
    <property type="evidence" value="ECO:0007669"/>
    <property type="project" value="UniProtKB-UniRule"/>
</dbReference>
<dbReference type="GO" id="GO:0003921">
    <property type="term" value="F:GMP synthase activity"/>
    <property type="evidence" value="ECO:0007669"/>
    <property type="project" value="InterPro"/>
</dbReference>
<dbReference type="CDD" id="cd01742">
    <property type="entry name" value="GATase1_GMP_Synthase"/>
    <property type="match status" value="1"/>
</dbReference>
<dbReference type="CDD" id="cd01997">
    <property type="entry name" value="GMP_synthase_C"/>
    <property type="match status" value="1"/>
</dbReference>
<dbReference type="FunFam" id="3.30.300.10:FF:000002">
    <property type="entry name" value="GMP synthase [glutamine-hydrolyzing]"/>
    <property type="match status" value="1"/>
</dbReference>
<dbReference type="FunFam" id="3.40.50.620:FF:000001">
    <property type="entry name" value="GMP synthase [glutamine-hydrolyzing]"/>
    <property type="match status" value="1"/>
</dbReference>
<dbReference type="FunFam" id="3.40.50.880:FF:000001">
    <property type="entry name" value="GMP synthase [glutamine-hydrolyzing]"/>
    <property type="match status" value="1"/>
</dbReference>
<dbReference type="Gene3D" id="3.30.300.10">
    <property type="match status" value="1"/>
</dbReference>
<dbReference type="Gene3D" id="3.40.50.880">
    <property type="match status" value="1"/>
</dbReference>
<dbReference type="Gene3D" id="3.40.50.620">
    <property type="entry name" value="HUPs"/>
    <property type="match status" value="1"/>
</dbReference>
<dbReference type="HAMAP" id="MF_00344">
    <property type="entry name" value="GMP_synthase"/>
    <property type="match status" value="1"/>
</dbReference>
<dbReference type="InterPro" id="IPR029062">
    <property type="entry name" value="Class_I_gatase-like"/>
</dbReference>
<dbReference type="InterPro" id="IPR017926">
    <property type="entry name" value="GATASE"/>
</dbReference>
<dbReference type="InterPro" id="IPR001674">
    <property type="entry name" value="GMP_synth_C"/>
</dbReference>
<dbReference type="InterPro" id="IPR004739">
    <property type="entry name" value="GMP_synth_GATase"/>
</dbReference>
<dbReference type="InterPro" id="IPR022955">
    <property type="entry name" value="GMP_synthase"/>
</dbReference>
<dbReference type="InterPro" id="IPR025777">
    <property type="entry name" value="GMPS_ATP_PPase_dom"/>
</dbReference>
<dbReference type="InterPro" id="IPR022310">
    <property type="entry name" value="NAD/GMP_synthase"/>
</dbReference>
<dbReference type="InterPro" id="IPR014729">
    <property type="entry name" value="Rossmann-like_a/b/a_fold"/>
</dbReference>
<dbReference type="NCBIfam" id="TIGR00884">
    <property type="entry name" value="guaA_Cterm"/>
    <property type="match status" value="1"/>
</dbReference>
<dbReference type="NCBIfam" id="TIGR00888">
    <property type="entry name" value="guaA_Nterm"/>
    <property type="match status" value="1"/>
</dbReference>
<dbReference type="NCBIfam" id="NF000848">
    <property type="entry name" value="PRK00074.1"/>
    <property type="match status" value="1"/>
</dbReference>
<dbReference type="PANTHER" id="PTHR11922:SF2">
    <property type="entry name" value="GMP SYNTHASE [GLUTAMINE-HYDROLYZING]"/>
    <property type="match status" value="1"/>
</dbReference>
<dbReference type="PANTHER" id="PTHR11922">
    <property type="entry name" value="GMP SYNTHASE-RELATED"/>
    <property type="match status" value="1"/>
</dbReference>
<dbReference type="Pfam" id="PF00117">
    <property type="entry name" value="GATase"/>
    <property type="match status" value="1"/>
</dbReference>
<dbReference type="Pfam" id="PF00958">
    <property type="entry name" value="GMP_synt_C"/>
    <property type="match status" value="1"/>
</dbReference>
<dbReference type="Pfam" id="PF02540">
    <property type="entry name" value="NAD_synthase"/>
    <property type="match status" value="1"/>
</dbReference>
<dbReference type="PRINTS" id="PR00097">
    <property type="entry name" value="ANTSNTHASEII"/>
</dbReference>
<dbReference type="PRINTS" id="PR00099">
    <property type="entry name" value="CPSGATASE"/>
</dbReference>
<dbReference type="PRINTS" id="PR00096">
    <property type="entry name" value="GATASE"/>
</dbReference>
<dbReference type="SUPFAM" id="SSF52402">
    <property type="entry name" value="Adenine nucleotide alpha hydrolases-like"/>
    <property type="match status" value="1"/>
</dbReference>
<dbReference type="SUPFAM" id="SSF52317">
    <property type="entry name" value="Class I glutamine amidotransferase-like"/>
    <property type="match status" value="1"/>
</dbReference>
<dbReference type="SUPFAM" id="SSF54810">
    <property type="entry name" value="GMP synthetase C-terminal dimerisation domain"/>
    <property type="match status" value="1"/>
</dbReference>
<dbReference type="PROSITE" id="PS51273">
    <property type="entry name" value="GATASE_TYPE_1"/>
    <property type="match status" value="1"/>
</dbReference>
<dbReference type="PROSITE" id="PS51553">
    <property type="entry name" value="GMPS_ATP_PPASE"/>
    <property type="match status" value="1"/>
</dbReference>
<sequence>MTNIHTDKILILDFGAQYTQLIARRIREIGVYCEIWAWDHDPSEIAGFGAKGIILSGGPESTTLPGAPVAPQEVFDSGLPVFGICYGMQTLAAQLGGATEAADQREFGHAEVDVIAADALFAGLTDHAGAPRLNVWMSHGDHVSQVPPGFTITATTDRIPVAAMSNEDKRWYGVQFHPEVTHTLQGQTLLRRFVVDICGCQTLWTAANIIDDQIARVREQVGDDDVILGLSGGVDSSVVAALLHKAIGDKLTCVFVDTGLLRWQEGDQVMAMFAEHMGVKVIRVNAADRYFAKLEGVSDPEAKRKIIGNLFVEIFDEESNTLANAKWLAQGTIYPDVIESAGSKTGNAHVIKSHHNVGGLPQHMKLGLVEPLRELFKDEVRRLGVELGLPRTMVYRHPFPGPGLGVRILGEVKREYAELLAKADAIFIDELRKADLYDKISQAFAVFLPVKSVGVVGDARAYEWVIALRAVETIDFMTAHWAHLPYDFLGTVSNRIINELRGVSRVVYDISGKPPATIEWE</sequence>
<protein>
    <recommendedName>
        <fullName evidence="1">GMP synthase [glutamine-hydrolyzing]</fullName>
        <ecNumber evidence="1">6.3.5.2</ecNumber>
    </recommendedName>
    <alternativeName>
        <fullName evidence="1">GMP synthetase</fullName>
    </alternativeName>
    <alternativeName>
        <fullName evidence="1">Glutamine amidotransferase</fullName>
    </alternativeName>
</protein>
<gene>
    <name evidence="1" type="primary">guaA</name>
    <name type="ordered locus">XOO2063</name>
</gene>
<feature type="chain" id="PRO_0000229490" description="GMP synthase [glutamine-hydrolyzing]">
    <location>
        <begin position="1"/>
        <end position="521"/>
    </location>
</feature>
<feature type="domain" description="Glutamine amidotransferase type-1" evidence="1">
    <location>
        <begin position="8"/>
        <end position="203"/>
    </location>
</feature>
<feature type="domain" description="GMPS ATP-PPase" evidence="1">
    <location>
        <begin position="204"/>
        <end position="396"/>
    </location>
</feature>
<feature type="active site" description="Nucleophile" evidence="1">
    <location>
        <position position="85"/>
    </location>
</feature>
<feature type="active site" evidence="1">
    <location>
        <position position="177"/>
    </location>
</feature>
<feature type="active site" evidence="1">
    <location>
        <position position="179"/>
    </location>
</feature>
<feature type="binding site" evidence="1">
    <location>
        <begin position="231"/>
        <end position="237"/>
    </location>
    <ligand>
        <name>ATP</name>
        <dbReference type="ChEBI" id="CHEBI:30616"/>
    </ligand>
</feature>